<keyword id="KW-1003">Cell membrane</keyword>
<keyword id="KW-0449">Lipoprotein</keyword>
<keyword id="KW-0472">Membrane</keyword>
<keyword id="KW-0564">Palmitate</keyword>
<keyword id="KW-0732">Signal</keyword>
<gene>
    <name type="ordered locus">SAS0400</name>
</gene>
<comment type="subcellular location">
    <subcellularLocation>
        <location evidence="1">Cell membrane</location>
        <topology evidence="1">Lipid-anchor</topology>
    </subcellularLocation>
</comment>
<comment type="similarity">
    <text evidence="2">Belongs to the staphylococcal tandem lipoprotein family.</text>
</comment>
<name>Y400_STAAS</name>
<reference key="1">
    <citation type="journal article" date="2004" name="Proc. Natl. Acad. Sci. U.S.A.">
        <title>Complete genomes of two clinical Staphylococcus aureus strains: evidence for the rapid evolution of virulence and drug resistance.</title>
        <authorList>
            <person name="Holden M.T.G."/>
            <person name="Feil E.J."/>
            <person name="Lindsay J.A."/>
            <person name="Peacock S.J."/>
            <person name="Day N.P.J."/>
            <person name="Enright M.C."/>
            <person name="Foster T.J."/>
            <person name="Moore C.E."/>
            <person name="Hurst L."/>
            <person name="Atkin R."/>
            <person name="Barron A."/>
            <person name="Bason N."/>
            <person name="Bentley S.D."/>
            <person name="Chillingworth C."/>
            <person name="Chillingworth T."/>
            <person name="Churcher C."/>
            <person name="Clark L."/>
            <person name="Corton C."/>
            <person name="Cronin A."/>
            <person name="Doggett J."/>
            <person name="Dowd L."/>
            <person name="Feltwell T."/>
            <person name="Hance Z."/>
            <person name="Harris B."/>
            <person name="Hauser H."/>
            <person name="Holroyd S."/>
            <person name="Jagels K."/>
            <person name="James K.D."/>
            <person name="Lennard N."/>
            <person name="Line A."/>
            <person name="Mayes R."/>
            <person name="Moule S."/>
            <person name="Mungall K."/>
            <person name="Ormond D."/>
            <person name="Quail M.A."/>
            <person name="Rabbinowitsch E."/>
            <person name="Rutherford K.M."/>
            <person name="Sanders M."/>
            <person name="Sharp S."/>
            <person name="Simmonds M."/>
            <person name="Stevens K."/>
            <person name="Whitehead S."/>
            <person name="Barrell B.G."/>
            <person name="Spratt B.G."/>
            <person name="Parkhill J."/>
        </authorList>
    </citation>
    <scope>NUCLEOTIDE SEQUENCE [LARGE SCALE GENOMIC DNA]</scope>
    <source>
        <strain>MSSA476</strain>
    </source>
</reference>
<dbReference type="EMBL" id="BX571857">
    <property type="protein sequence ID" value="CAG42173.1"/>
    <property type="molecule type" value="Genomic_DNA"/>
</dbReference>
<dbReference type="SMR" id="Q6GC47"/>
<dbReference type="KEGG" id="sas:SAS0400"/>
<dbReference type="HOGENOM" id="CLU_071589_0_1_9"/>
<dbReference type="GO" id="GO:0005886">
    <property type="term" value="C:plasma membrane"/>
    <property type="evidence" value="ECO:0007669"/>
    <property type="project" value="UniProtKB-SubCell"/>
</dbReference>
<dbReference type="Gene3D" id="2.50.20.40">
    <property type="match status" value="1"/>
</dbReference>
<dbReference type="InterPro" id="IPR007595">
    <property type="entry name" value="Csa"/>
</dbReference>
<dbReference type="InterPro" id="IPR038641">
    <property type="entry name" value="Csa_sf"/>
</dbReference>
<dbReference type="NCBIfam" id="TIGR01742">
    <property type="entry name" value="SA_tandem_lipo"/>
    <property type="match status" value="1"/>
</dbReference>
<dbReference type="Pfam" id="PF04507">
    <property type="entry name" value="DUF576"/>
    <property type="match status" value="1"/>
</dbReference>
<dbReference type="PROSITE" id="PS51257">
    <property type="entry name" value="PROKAR_LIPOPROTEIN"/>
    <property type="match status" value="1"/>
</dbReference>
<organism>
    <name type="scientific">Staphylococcus aureus (strain MSSA476)</name>
    <dbReference type="NCBI Taxonomy" id="282459"/>
    <lineage>
        <taxon>Bacteria</taxon>
        <taxon>Bacillati</taxon>
        <taxon>Bacillota</taxon>
        <taxon>Bacilli</taxon>
        <taxon>Bacillales</taxon>
        <taxon>Staphylococcaceae</taxon>
        <taxon>Staphylococcus</taxon>
    </lineage>
</organism>
<evidence type="ECO:0000255" key="1">
    <source>
        <dbReference type="PROSITE-ProRule" id="PRU00303"/>
    </source>
</evidence>
<evidence type="ECO:0000305" key="2"/>
<proteinExistence type="inferred from homology"/>
<accession>Q6GC47</accession>
<sequence>MGYLKRIGMCISLLIVIIFVTSCGGGNKITGDSKETQIKKSFAKTLDMYPIKNLEDLYDKEGYRDGEFKKGDKGMWTIYTDFAKSNKPGELDDEGMVLNLDRNTRTAKGYYFVKKFYEKDKLPDRKNYKVEMKNNKSILLDKVEDPNLKKRIENFKFFGQYANFKDLENYNNGDVSINWNVPSYDVEYKMSNKDENVKQLRSRYNIPTDKAPMLKMHIDGDLKGSSVGYKRLEIDFSKEDRDISVIDYLSYKPAKK</sequence>
<feature type="signal peptide" evidence="1">
    <location>
        <begin position="1"/>
        <end position="22"/>
    </location>
</feature>
<feature type="chain" id="PRO_0000282167" description="Uncharacterized lipoprotein SAS0400">
    <location>
        <begin position="23"/>
        <end position="256"/>
    </location>
</feature>
<feature type="lipid moiety-binding region" description="N-palmitoyl cysteine" evidence="1">
    <location>
        <position position="23"/>
    </location>
</feature>
<feature type="lipid moiety-binding region" description="S-diacylglycerol cysteine" evidence="1">
    <location>
        <position position="23"/>
    </location>
</feature>
<protein>
    <recommendedName>
        <fullName>Uncharacterized lipoprotein SAS0400</fullName>
    </recommendedName>
</protein>